<reference key="1">
    <citation type="journal article" date="2008" name="PLoS Genet.">
        <title>Complete genome sequence of the N2-fixing broad host range endophyte Klebsiella pneumoniae 342 and virulence predictions verified in mice.</title>
        <authorList>
            <person name="Fouts D.E."/>
            <person name="Tyler H.L."/>
            <person name="DeBoy R.T."/>
            <person name="Daugherty S."/>
            <person name="Ren Q."/>
            <person name="Badger J.H."/>
            <person name="Durkin A.S."/>
            <person name="Huot H."/>
            <person name="Shrivastava S."/>
            <person name="Kothari S."/>
            <person name="Dodson R.J."/>
            <person name="Mohamoud Y."/>
            <person name="Khouri H."/>
            <person name="Roesch L.F.W."/>
            <person name="Krogfelt K.A."/>
            <person name="Struve C."/>
            <person name="Triplett E.W."/>
            <person name="Methe B.A."/>
        </authorList>
    </citation>
    <scope>NUCLEOTIDE SEQUENCE [LARGE SCALE GENOMIC DNA]</scope>
    <source>
        <strain>342</strain>
    </source>
</reference>
<gene>
    <name evidence="1" type="primary">aas</name>
    <name type="ordered locus">KPK_0869</name>
</gene>
<name>AAS_KLEP3</name>
<feature type="chain" id="PRO_1000137894" description="Bifunctional protein Aas">
    <location>
        <begin position="1"/>
        <end position="719"/>
    </location>
</feature>
<feature type="transmembrane region" description="Helical" evidence="1">
    <location>
        <begin position="258"/>
        <end position="277"/>
    </location>
</feature>
<feature type="transmembrane region" description="Helical" evidence="1">
    <location>
        <begin position="409"/>
        <end position="433"/>
    </location>
</feature>
<feature type="region of interest" description="Acyltransferase">
    <location>
        <begin position="15"/>
        <end position="138"/>
    </location>
</feature>
<feature type="region of interest" description="AMP-binding">
    <location>
        <begin position="233"/>
        <end position="646"/>
    </location>
</feature>
<feature type="active site" evidence="1">
    <location>
        <position position="36"/>
    </location>
</feature>
<sequence length="719" mass="80274">MLLGFFRLLFKGLYRVRLTGDTQALYQQKVLITPNHVSFLDGILLALFLPVRPVFAVYTSISQRWFMRALTPIIDFVPLDPTKPMSIKHLVRLIEQGRPVVIFPEGRISVSGSLMKIYDGAAFVAAKSQATIVPLRIDGAELTPFSRLKGLVKRRLFPRIQLHLLPPTHLPMPEAPRARDRRKIAGEMLHQIMMEARMAVRPRETLYESLLAAQDRFGARKPCVEDINFQPDTYRKLLTKTLFVARILEKYSQRGEKIGLMLPNAGISAAVIFGAIARGRIPAMMNYTAGVKGLSSAIAAAEINTIFTSRTFLDKGKLWHLPEQLTQVRWVFLEDLKGDITLADKLWIFGHLLAPRLAQVKQQPEDAAMILFTSGSEGNPKGVVHSHKSLLANVEQIKTIADFTANDRFMSALPLFHSFGLTVGLLTPLFTGAEVFLYPSPLHYRVVPELVYDRNCTVLFGTSTFLANYARFANPYDFYRLRYVVAGAEKLQESTKQLWQDKFGLRILEGYGVTECAPVVSINVPMAAKVGTVGRILPGMDARLLAMPGIEQGGRLQLKGPNIMKGYLRVENPGVLEAPAAENQHGEKEAGWYDTGDIVTFDEQGYVRIQGRAKRFAKIAGEMISLEMVEQVALGASPDKMHATAIKQDASKGEALVLFTTDNELTREALLRYARQHGVPELAVPRDIRWLKQLPVLGSGKPDYVTLKNMVDEAETTHE</sequence>
<organism>
    <name type="scientific">Klebsiella pneumoniae (strain 342)</name>
    <dbReference type="NCBI Taxonomy" id="507522"/>
    <lineage>
        <taxon>Bacteria</taxon>
        <taxon>Pseudomonadati</taxon>
        <taxon>Pseudomonadota</taxon>
        <taxon>Gammaproteobacteria</taxon>
        <taxon>Enterobacterales</taxon>
        <taxon>Enterobacteriaceae</taxon>
        <taxon>Klebsiella/Raoultella group</taxon>
        <taxon>Klebsiella</taxon>
        <taxon>Klebsiella pneumoniae complex</taxon>
    </lineage>
</organism>
<accession>B5XUP2</accession>
<keyword id="KW-0012">Acyltransferase</keyword>
<keyword id="KW-0067">ATP-binding</keyword>
<keyword id="KW-0997">Cell inner membrane</keyword>
<keyword id="KW-1003">Cell membrane</keyword>
<keyword id="KW-0436">Ligase</keyword>
<keyword id="KW-0472">Membrane</keyword>
<keyword id="KW-0511">Multifunctional enzyme</keyword>
<keyword id="KW-0547">Nucleotide-binding</keyword>
<keyword id="KW-0808">Transferase</keyword>
<keyword id="KW-0812">Transmembrane</keyword>
<keyword id="KW-1133">Transmembrane helix</keyword>
<proteinExistence type="inferred from homology"/>
<dbReference type="EC" id="2.3.1.40" evidence="1"/>
<dbReference type="EC" id="6.2.1.20" evidence="1"/>
<dbReference type="EMBL" id="CP000964">
    <property type="protein sequence ID" value="ACI11143.1"/>
    <property type="molecule type" value="Genomic_DNA"/>
</dbReference>
<dbReference type="SMR" id="B5XUP2"/>
<dbReference type="KEGG" id="kpe:KPK_0869"/>
<dbReference type="HOGENOM" id="CLU_000022_59_8_6"/>
<dbReference type="Proteomes" id="UP000001734">
    <property type="component" value="Chromosome"/>
</dbReference>
<dbReference type="GO" id="GO:0005886">
    <property type="term" value="C:plasma membrane"/>
    <property type="evidence" value="ECO:0007669"/>
    <property type="project" value="UniProtKB-SubCell"/>
</dbReference>
<dbReference type="GO" id="GO:0008779">
    <property type="term" value="F:acyl-[acyl-carrier-protein]-phospholipid O-acyltransferase activity"/>
    <property type="evidence" value="ECO:0007669"/>
    <property type="project" value="UniProtKB-UniRule"/>
</dbReference>
<dbReference type="GO" id="GO:0005524">
    <property type="term" value="F:ATP binding"/>
    <property type="evidence" value="ECO:0007669"/>
    <property type="project" value="UniProtKB-KW"/>
</dbReference>
<dbReference type="GO" id="GO:0008922">
    <property type="term" value="F:long-chain fatty acid [acyl-carrier-protein] ligase activity"/>
    <property type="evidence" value="ECO:0007669"/>
    <property type="project" value="UniProtKB-UniRule"/>
</dbReference>
<dbReference type="GO" id="GO:0031956">
    <property type="term" value="F:medium-chain fatty acid-CoA ligase activity"/>
    <property type="evidence" value="ECO:0007669"/>
    <property type="project" value="TreeGrafter"/>
</dbReference>
<dbReference type="GO" id="GO:0006631">
    <property type="term" value="P:fatty acid metabolic process"/>
    <property type="evidence" value="ECO:0007669"/>
    <property type="project" value="InterPro"/>
</dbReference>
<dbReference type="GO" id="GO:0008654">
    <property type="term" value="P:phospholipid biosynthetic process"/>
    <property type="evidence" value="ECO:0007669"/>
    <property type="project" value="InterPro"/>
</dbReference>
<dbReference type="CDD" id="cd07989">
    <property type="entry name" value="LPLAT_AGPAT-like"/>
    <property type="match status" value="1"/>
</dbReference>
<dbReference type="Gene3D" id="3.30.300.30">
    <property type="match status" value="1"/>
</dbReference>
<dbReference type="Gene3D" id="3.40.50.12780">
    <property type="entry name" value="N-terminal domain of ligase-like"/>
    <property type="match status" value="1"/>
</dbReference>
<dbReference type="HAMAP" id="MF_01162">
    <property type="entry name" value="Aas"/>
    <property type="match status" value="1"/>
</dbReference>
<dbReference type="InterPro" id="IPR023775">
    <property type="entry name" value="Aas"/>
</dbReference>
<dbReference type="InterPro" id="IPR045851">
    <property type="entry name" value="AMP-bd_C_sf"/>
</dbReference>
<dbReference type="InterPro" id="IPR020845">
    <property type="entry name" value="AMP-binding_CS"/>
</dbReference>
<dbReference type="InterPro" id="IPR000873">
    <property type="entry name" value="AMP-dep_synth/lig_dom"/>
</dbReference>
<dbReference type="InterPro" id="IPR042099">
    <property type="entry name" value="ANL_N_sf"/>
</dbReference>
<dbReference type="InterPro" id="IPR002123">
    <property type="entry name" value="Plipid/glycerol_acylTrfase"/>
</dbReference>
<dbReference type="NCBIfam" id="NF005959">
    <property type="entry name" value="PRK08043.1"/>
    <property type="match status" value="1"/>
</dbReference>
<dbReference type="PANTHER" id="PTHR43201">
    <property type="entry name" value="ACYL-COA SYNTHETASE"/>
    <property type="match status" value="1"/>
</dbReference>
<dbReference type="PANTHER" id="PTHR43201:SF5">
    <property type="entry name" value="MEDIUM-CHAIN ACYL-COA LIGASE ACSF2, MITOCHONDRIAL"/>
    <property type="match status" value="1"/>
</dbReference>
<dbReference type="Pfam" id="PF01553">
    <property type="entry name" value="Acyltransferase"/>
    <property type="match status" value="1"/>
</dbReference>
<dbReference type="Pfam" id="PF00501">
    <property type="entry name" value="AMP-binding"/>
    <property type="match status" value="1"/>
</dbReference>
<dbReference type="SMART" id="SM00563">
    <property type="entry name" value="PlsC"/>
    <property type="match status" value="1"/>
</dbReference>
<dbReference type="SUPFAM" id="SSF56801">
    <property type="entry name" value="Acetyl-CoA synthetase-like"/>
    <property type="match status" value="1"/>
</dbReference>
<dbReference type="SUPFAM" id="SSF69593">
    <property type="entry name" value="Glycerol-3-phosphate (1)-acyltransferase"/>
    <property type="match status" value="1"/>
</dbReference>
<dbReference type="PROSITE" id="PS00455">
    <property type="entry name" value="AMP_BINDING"/>
    <property type="match status" value="1"/>
</dbReference>
<comment type="function">
    <text evidence="1">Plays a role in lysophospholipid acylation. Transfers fatty acids to the 1-position via an enzyme-bound acyl-ACP intermediate in the presence of ATP and magnesium. Its physiological function is to regenerate phosphatidylethanolamine from 2-acyl-glycero-3-phosphoethanolamine (2-acyl-GPE) formed by transacylation reactions or degradation by phospholipase A1.</text>
</comment>
<comment type="catalytic activity">
    <reaction evidence="1">
        <text>a 2-acyl-sn-glycero-3-phosphoethanolamine + a fatty acyl-[ACP] = a 1,2-diacyl-sn-glycero-3-phosphoethanolamine + holo-[ACP]</text>
        <dbReference type="Rhea" id="RHEA:10304"/>
        <dbReference type="Rhea" id="RHEA-COMP:9685"/>
        <dbReference type="Rhea" id="RHEA-COMP:14125"/>
        <dbReference type="ChEBI" id="CHEBI:64479"/>
        <dbReference type="ChEBI" id="CHEBI:64612"/>
        <dbReference type="ChEBI" id="CHEBI:65213"/>
        <dbReference type="ChEBI" id="CHEBI:138651"/>
        <dbReference type="EC" id="2.3.1.40"/>
    </reaction>
</comment>
<comment type="catalytic activity">
    <reaction evidence="1">
        <text>a long-chain fatty acid + holo-[ACP] + ATP = a long-chain fatty acyl-[ACP] + AMP + diphosphate</text>
        <dbReference type="Rhea" id="RHEA:45588"/>
        <dbReference type="Rhea" id="RHEA-COMP:9685"/>
        <dbReference type="Rhea" id="RHEA-COMP:12682"/>
        <dbReference type="ChEBI" id="CHEBI:30616"/>
        <dbReference type="ChEBI" id="CHEBI:33019"/>
        <dbReference type="ChEBI" id="CHEBI:57560"/>
        <dbReference type="ChEBI" id="CHEBI:64479"/>
        <dbReference type="ChEBI" id="CHEBI:133243"/>
        <dbReference type="ChEBI" id="CHEBI:456215"/>
        <dbReference type="EC" id="6.2.1.20"/>
    </reaction>
</comment>
<comment type="subcellular location">
    <subcellularLocation>
        <location evidence="1">Cell inner membrane</location>
        <topology evidence="1">Multi-pass membrane protein</topology>
    </subcellularLocation>
</comment>
<comment type="similarity">
    <text evidence="1">In the N-terminal section; belongs to the 2-acyl-GPE acetyltransferase family.</text>
</comment>
<comment type="similarity">
    <text evidence="1">In the C-terminal section; belongs to the ATP-dependent AMP-binding enzyme family.</text>
</comment>
<evidence type="ECO:0000255" key="1">
    <source>
        <dbReference type="HAMAP-Rule" id="MF_01162"/>
    </source>
</evidence>
<protein>
    <recommendedName>
        <fullName evidence="1">Bifunctional protein Aas</fullName>
    </recommendedName>
    <domain>
        <recommendedName>
            <fullName evidence="1">2-acylglycerophosphoethanolamine acyltransferase</fullName>
            <ecNumber evidence="1">2.3.1.40</ecNumber>
        </recommendedName>
        <alternativeName>
            <fullName evidence="1">2-acyl-GPE acyltransferase</fullName>
        </alternativeName>
        <alternativeName>
            <fullName evidence="1">Acyl-[acyl-carrier-protein]--phospholipid O-acyltransferase</fullName>
        </alternativeName>
    </domain>
    <domain>
        <recommendedName>
            <fullName evidence="1">Acyl-[acyl-carrier-protein] synthetase</fullName>
            <ecNumber evidence="1">6.2.1.20</ecNumber>
        </recommendedName>
        <alternativeName>
            <fullName evidence="1">Acyl-ACP synthetase</fullName>
        </alternativeName>
        <alternativeName>
            <fullName evidence="1">Long-chain-fatty-acid--[acyl-carrier-protein] ligase</fullName>
        </alternativeName>
    </domain>
</protein>